<keyword id="KW-0131">Cell cycle</keyword>
<keyword id="KW-0132">Cell division</keyword>
<keyword id="KW-1003">Cell membrane</keyword>
<keyword id="KW-0133">Cell shape</keyword>
<keyword id="KW-0961">Cell wall biogenesis/degradation</keyword>
<keyword id="KW-0328">Glycosyltransferase</keyword>
<keyword id="KW-0472">Membrane</keyword>
<keyword id="KW-0573">Peptidoglycan synthesis</keyword>
<keyword id="KW-1185">Reference proteome</keyword>
<keyword id="KW-0808">Transferase</keyword>
<dbReference type="EC" id="2.4.1.227" evidence="1"/>
<dbReference type="EMBL" id="CP001034">
    <property type="protein sequence ID" value="ACB84887.1"/>
    <property type="molecule type" value="Genomic_DNA"/>
</dbReference>
<dbReference type="RefSeq" id="WP_012447762.1">
    <property type="nucleotide sequence ID" value="NC_010718.1"/>
</dbReference>
<dbReference type="SMR" id="B2A2H2"/>
<dbReference type="FunCoup" id="B2A2H2">
    <property type="interactions" value="316"/>
</dbReference>
<dbReference type="STRING" id="457570.Nther_1304"/>
<dbReference type="CAZy" id="GT28">
    <property type="family name" value="Glycosyltransferase Family 28"/>
</dbReference>
<dbReference type="KEGG" id="nth:Nther_1304"/>
<dbReference type="eggNOG" id="COG0707">
    <property type="taxonomic scope" value="Bacteria"/>
</dbReference>
<dbReference type="HOGENOM" id="CLU_037404_0_1_9"/>
<dbReference type="InParanoid" id="B2A2H2"/>
<dbReference type="OrthoDB" id="9808936at2"/>
<dbReference type="UniPathway" id="UPA00219"/>
<dbReference type="Proteomes" id="UP000001683">
    <property type="component" value="Chromosome"/>
</dbReference>
<dbReference type="GO" id="GO:0005886">
    <property type="term" value="C:plasma membrane"/>
    <property type="evidence" value="ECO:0007669"/>
    <property type="project" value="UniProtKB-SubCell"/>
</dbReference>
<dbReference type="GO" id="GO:0051991">
    <property type="term" value="F:UDP-N-acetyl-D-glucosamine:N-acetylmuramoyl-L-alanyl-D-glutamyl-meso-2,6-diaminopimelyl-D-alanyl-D-alanine-diphosphoundecaprenol 4-beta-N-acetylglucosaminlytransferase activity"/>
    <property type="evidence" value="ECO:0007669"/>
    <property type="project" value="RHEA"/>
</dbReference>
<dbReference type="GO" id="GO:0050511">
    <property type="term" value="F:undecaprenyldiphospho-muramoylpentapeptide beta-N-acetylglucosaminyltransferase activity"/>
    <property type="evidence" value="ECO:0007669"/>
    <property type="project" value="UniProtKB-UniRule"/>
</dbReference>
<dbReference type="GO" id="GO:0005975">
    <property type="term" value="P:carbohydrate metabolic process"/>
    <property type="evidence" value="ECO:0007669"/>
    <property type="project" value="InterPro"/>
</dbReference>
<dbReference type="GO" id="GO:0051301">
    <property type="term" value="P:cell division"/>
    <property type="evidence" value="ECO:0007669"/>
    <property type="project" value="UniProtKB-KW"/>
</dbReference>
<dbReference type="GO" id="GO:0071555">
    <property type="term" value="P:cell wall organization"/>
    <property type="evidence" value="ECO:0007669"/>
    <property type="project" value="UniProtKB-KW"/>
</dbReference>
<dbReference type="GO" id="GO:0030259">
    <property type="term" value="P:lipid glycosylation"/>
    <property type="evidence" value="ECO:0007669"/>
    <property type="project" value="UniProtKB-UniRule"/>
</dbReference>
<dbReference type="GO" id="GO:0009252">
    <property type="term" value="P:peptidoglycan biosynthetic process"/>
    <property type="evidence" value="ECO:0007669"/>
    <property type="project" value="UniProtKB-UniRule"/>
</dbReference>
<dbReference type="GO" id="GO:0008360">
    <property type="term" value="P:regulation of cell shape"/>
    <property type="evidence" value="ECO:0007669"/>
    <property type="project" value="UniProtKB-KW"/>
</dbReference>
<dbReference type="CDD" id="cd03785">
    <property type="entry name" value="GT28_MurG"/>
    <property type="match status" value="1"/>
</dbReference>
<dbReference type="Gene3D" id="3.40.50.2000">
    <property type="entry name" value="Glycogen Phosphorylase B"/>
    <property type="match status" value="2"/>
</dbReference>
<dbReference type="HAMAP" id="MF_00033">
    <property type="entry name" value="MurG"/>
    <property type="match status" value="1"/>
</dbReference>
<dbReference type="InterPro" id="IPR006009">
    <property type="entry name" value="GlcNAc_MurG"/>
</dbReference>
<dbReference type="InterPro" id="IPR007235">
    <property type="entry name" value="Glyco_trans_28_C"/>
</dbReference>
<dbReference type="InterPro" id="IPR004276">
    <property type="entry name" value="GlycoTrans_28_N"/>
</dbReference>
<dbReference type="NCBIfam" id="TIGR01133">
    <property type="entry name" value="murG"/>
    <property type="match status" value="1"/>
</dbReference>
<dbReference type="PANTHER" id="PTHR21015:SF22">
    <property type="entry name" value="GLYCOSYLTRANSFERASE"/>
    <property type="match status" value="1"/>
</dbReference>
<dbReference type="PANTHER" id="PTHR21015">
    <property type="entry name" value="UDP-N-ACETYLGLUCOSAMINE--N-ACETYLMURAMYL-(PENTAPEPTIDE) PYROPHOSPHORYL-UNDECAPRENOL N-ACETYLGLUCOSAMINE TRANSFERASE 1"/>
    <property type="match status" value="1"/>
</dbReference>
<dbReference type="Pfam" id="PF04101">
    <property type="entry name" value="Glyco_tran_28_C"/>
    <property type="match status" value="1"/>
</dbReference>
<dbReference type="Pfam" id="PF03033">
    <property type="entry name" value="Glyco_transf_28"/>
    <property type="match status" value="1"/>
</dbReference>
<dbReference type="SUPFAM" id="SSF53756">
    <property type="entry name" value="UDP-Glycosyltransferase/glycogen phosphorylase"/>
    <property type="match status" value="1"/>
</dbReference>
<feature type="chain" id="PRO_1000090452" description="UDP-N-acetylglucosamine--N-acetylmuramyl-(pentapeptide) pyrophosphoryl-undecaprenol N-acetylglucosamine transferase">
    <location>
        <begin position="1"/>
        <end position="367"/>
    </location>
</feature>
<feature type="binding site" evidence="1">
    <location>
        <begin position="10"/>
        <end position="12"/>
    </location>
    <ligand>
        <name>UDP-N-acetyl-alpha-D-glucosamine</name>
        <dbReference type="ChEBI" id="CHEBI:57705"/>
    </ligand>
</feature>
<feature type="binding site" evidence="1">
    <location>
        <position position="124"/>
    </location>
    <ligand>
        <name>UDP-N-acetyl-alpha-D-glucosamine</name>
        <dbReference type="ChEBI" id="CHEBI:57705"/>
    </ligand>
</feature>
<feature type="binding site" evidence="1">
    <location>
        <position position="196"/>
    </location>
    <ligand>
        <name>UDP-N-acetyl-alpha-D-glucosamine</name>
        <dbReference type="ChEBI" id="CHEBI:57705"/>
    </ligand>
</feature>
<feature type="binding site" evidence="1">
    <location>
        <position position="300"/>
    </location>
    <ligand>
        <name>UDP-N-acetyl-alpha-D-glucosamine</name>
        <dbReference type="ChEBI" id="CHEBI:57705"/>
    </ligand>
</feature>
<organism>
    <name type="scientific">Natranaerobius thermophilus (strain ATCC BAA-1301 / DSM 18059 / JW/NM-WN-LF)</name>
    <dbReference type="NCBI Taxonomy" id="457570"/>
    <lineage>
        <taxon>Bacteria</taxon>
        <taxon>Bacillati</taxon>
        <taxon>Bacillota</taxon>
        <taxon>Clostridia</taxon>
        <taxon>Natranaerobiales</taxon>
        <taxon>Natranaerobiaceae</taxon>
        <taxon>Natranaerobius</taxon>
    </lineage>
</organism>
<reference key="1">
    <citation type="submission" date="2008-04" db="EMBL/GenBank/DDBJ databases">
        <title>Complete sequence of chromosome of Natranaerobius thermophilus JW/NM-WN-LF.</title>
        <authorList>
            <consortium name="US DOE Joint Genome Institute"/>
            <person name="Copeland A."/>
            <person name="Lucas S."/>
            <person name="Lapidus A."/>
            <person name="Glavina del Rio T."/>
            <person name="Dalin E."/>
            <person name="Tice H."/>
            <person name="Bruce D."/>
            <person name="Goodwin L."/>
            <person name="Pitluck S."/>
            <person name="Chertkov O."/>
            <person name="Brettin T."/>
            <person name="Detter J.C."/>
            <person name="Han C."/>
            <person name="Kuske C.R."/>
            <person name="Schmutz J."/>
            <person name="Larimer F."/>
            <person name="Land M."/>
            <person name="Hauser L."/>
            <person name="Kyrpides N."/>
            <person name="Lykidis A."/>
            <person name="Mesbah N.M."/>
            <person name="Wiegel J."/>
        </authorList>
    </citation>
    <scope>NUCLEOTIDE SEQUENCE [LARGE SCALE GENOMIC DNA]</scope>
    <source>
        <strain>ATCC BAA-1301 / DSM 18059 / JW/NM-WN-LF</strain>
    </source>
</reference>
<comment type="function">
    <text evidence="1">Cell wall formation. Catalyzes the transfer of a GlcNAc subunit on undecaprenyl-pyrophosphoryl-MurNAc-pentapeptide (lipid intermediate I) to form undecaprenyl-pyrophosphoryl-MurNAc-(pentapeptide)GlcNAc (lipid intermediate II).</text>
</comment>
<comment type="catalytic activity">
    <reaction evidence="1">
        <text>di-trans,octa-cis-undecaprenyl diphospho-N-acetyl-alpha-D-muramoyl-L-alanyl-D-glutamyl-meso-2,6-diaminopimeloyl-D-alanyl-D-alanine + UDP-N-acetyl-alpha-D-glucosamine = di-trans,octa-cis-undecaprenyl diphospho-[N-acetyl-alpha-D-glucosaminyl-(1-&gt;4)]-N-acetyl-alpha-D-muramoyl-L-alanyl-D-glutamyl-meso-2,6-diaminopimeloyl-D-alanyl-D-alanine + UDP + H(+)</text>
        <dbReference type="Rhea" id="RHEA:31227"/>
        <dbReference type="ChEBI" id="CHEBI:15378"/>
        <dbReference type="ChEBI" id="CHEBI:57705"/>
        <dbReference type="ChEBI" id="CHEBI:58223"/>
        <dbReference type="ChEBI" id="CHEBI:61387"/>
        <dbReference type="ChEBI" id="CHEBI:61388"/>
        <dbReference type="EC" id="2.4.1.227"/>
    </reaction>
</comment>
<comment type="pathway">
    <text evidence="1">Cell wall biogenesis; peptidoglycan biosynthesis.</text>
</comment>
<comment type="subcellular location">
    <subcellularLocation>
        <location evidence="1">Cell membrane</location>
        <topology evidence="1">Peripheral membrane protein</topology>
        <orientation evidence="1">Cytoplasmic side</orientation>
    </subcellularLocation>
</comment>
<comment type="similarity">
    <text evidence="1">Belongs to the glycosyltransferase 28 family. MurG subfamily.</text>
</comment>
<protein>
    <recommendedName>
        <fullName evidence="1">UDP-N-acetylglucosamine--N-acetylmuramyl-(pentapeptide) pyrophosphoryl-undecaprenol N-acetylglucosamine transferase</fullName>
        <ecNumber evidence="1">2.4.1.227</ecNumber>
    </recommendedName>
    <alternativeName>
        <fullName evidence="1">Undecaprenyl-PP-MurNAc-pentapeptide-UDPGlcNAc GlcNAc transferase</fullName>
    </alternativeName>
</protein>
<evidence type="ECO:0000255" key="1">
    <source>
        <dbReference type="HAMAP-Rule" id="MF_00033"/>
    </source>
</evidence>
<name>MURG_NATTJ</name>
<gene>
    <name evidence="1" type="primary">murG</name>
    <name type="ordered locus">Nther_1304</name>
</gene>
<sequence length="367" mass="40662">MKVLVTGGGTGGHIYPALAVINELKERNQIVDILYVGTSKGMEQEIIPNRGIDFAAITVRGLQRKINLEQVYFLRDFLKGLYQSYRLIKNFTPDVVIGTGGYVCGPVLMAASLMKIPTVLHEQNVIPGITNKFLSRFADYTCVSFPESKNYMTKAKKIITTGNPRAQEITSRDFSSVNKHLNLRSDLKTLLIVSGSRGAQKINETMINIIPELISKFPIQIIYVTGNNYYESIRSQILEYVDNSYQDRLKLHAYLSDLPAAISCADLVISRAGATTLAELTAAETPSILIPSPNVTNDHQRVNAKILGERGAAKVLTEDSLNEQEVIKSISSIINDEEVLFDMQRATKEISYPTAATEICKILESLI</sequence>
<accession>B2A2H2</accession>
<proteinExistence type="inferred from homology"/>